<feature type="chain" id="PRO_0000216036" description="Chalcone synthase B">
    <location>
        <begin position="1"/>
        <end position="363" status="greater than"/>
    </location>
</feature>
<feature type="active site" evidence="1">
    <location>
        <position position="170"/>
    </location>
</feature>
<feature type="non-terminal residue">
    <location>
        <position position="363"/>
    </location>
</feature>
<organism>
    <name type="scientific">Ipomoea nil</name>
    <name type="common">Japanese morning glory</name>
    <name type="synonym">Pharbitis nil</name>
    <dbReference type="NCBI Taxonomy" id="35883"/>
    <lineage>
        <taxon>Eukaryota</taxon>
        <taxon>Viridiplantae</taxon>
        <taxon>Streptophyta</taxon>
        <taxon>Embryophyta</taxon>
        <taxon>Tracheophyta</taxon>
        <taxon>Spermatophyta</taxon>
        <taxon>Magnoliopsida</taxon>
        <taxon>eudicotyledons</taxon>
        <taxon>Gunneridae</taxon>
        <taxon>Pentapetalae</taxon>
        <taxon>asterids</taxon>
        <taxon>lamiids</taxon>
        <taxon>Solanales</taxon>
        <taxon>Convolvulaceae</taxon>
        <taxon>Ipomoeeae</taxon>
        <taxon>Ipomoea</taxon>
    </lineage>
</organism>
<dbReference type="EC" id="2.3.1.74"/>
<dbReference type="EMBL" id="U15944">
    <property type="protein sequence ID" value="AAC49029.1"/>
    <property type="molecule type" value="Genomic_DNA"/>
</dbReference>
<dbReference type="SMR" id="P48396"/>
<dbReference type="UniPathway" id="UPA00154"/>
<dbReference type="GO" id="GO:0016210">
    <property type="term" value="F:naringenin-chalcone synthase activity"/>
    <property type="evidence" value="ECO:0007669"/>
    <property type="project" value="UniProtKB-EC"/>
</dbReference>
<dbReference type="GO" id="GO:0009813">
    <property type="term" value="P:flavonoid biosynthetic process"/>
    <property type="evidence" value="ECO:0007669"/>
    <property type="project" value="UniProtKB-UniPathway"/>
</dbReference>
<dbReference type="GO" id="GO:0030639">
    <property type="term" value="P:polyketide biosynthetic process"/>
    <property type="evidence" value="ECO:0007669"/>
    <property type="project" value="TreeGrafter"/>
</dbReference>
<dbReference type="CDD" id="cd00831">
    <property type="entry name" value="CHS_like"/>
    <property type="match status" value="1"/>
</dbReference>
<dbReference type="FunFam" id="3.40.47.10:FF:000014">
    <property type="entry name" value="Chalcone synthase 1"/>
    <property type="match status" value="1"/>
</dbReference>
<dbReference type="FunFam" id="3.40.47.10:FF:000025">
    <property type="entry name" value="Chalcone synthase 2"/>
    <property type="match status" value="1"/>
</dbReference>
<dbReference type="Gene3D" id="3.40.47.10">
    <property type="match status" value="2"/>
</dbReference>
<dbReference type="InterPro" id="IPR012328">
    <property type="entry name" value="Chalcone/stilbene_synt_C"/>
</dbReference>
<dbReference type="InterPro" id="IPR001099">
    <property type="entry name" value="Chalcone/stilbene_synt_N"/>
</dbReference>
<dbReference type="InterPro" id="IPR018088">
    <property type="entry name" value="Chalcone/stilbene_synthase_AS"/>
</dbReference>
<dbReference type="InterPro" id="IPR011141">
    <property type="entry name" value="Polyketide_synthase_type-III"/>
</dbReference>
<dbReference type="InterPro" id="IPR016039">
    <property type="entry name" value="Thiolase-like"/>
</dbReference>
<dbReference type="PANTHER" id="PTHR11877:SF104">
    <property type="entry name" value="CHALCONE SYNTHASE"/>
    <property type="match status" value="1"/>
</dbReference>
<dbReference type="PANTHER" id="PTHR11877">
    <property type="entry name" value="HYDROXYMETHYLGLUTARYL-COA SYNTHASE"/>
    <property type="match status" value="1"/>
</dbReference>
<dbReference type="Pfam" id="PF02797">
    <property type="entry name" value="Chal_sti_synt_C"/>
    <property type="match status" value="1"/>
</dbReference>
<dbReference type="Pfam" id="PF00195">
    <property type="entry name" value="Chal_sti_synt_N"/>
    <property type="match status" value="1"/>
</dbReference>
<dbReference type="PIRSF" id="PIRSF000451">
    <property type="entry name" value="PKS_III"/>
    <property type="match status" value="1"/>
</dbReference>
<dbReference type="SUPFAM" id="SSF53901">
    <property type="entry name" value="Thiolase-like"/>
    <property type="match status" value="2"/>
</dbReference>
<dbReference type="PROSITE" id="PS00441">
    <property type="entry name" value="CHALCONE_SYNTH"/>
    <property type="match status" value="1"/>
</dbReference>
<comment type="function">
    <text>The primary product of this enzyme is 4,2',4',6'-tetrahydroxychalcone (also termed naringenin-chalcone or chalcone) which can under specific conditions spontaneously isomerize into naringenin.</text>
</comment>
<comment type="catalytic activity">
    <reaction evidence="1">
        <text>(E)-4-coumaroyl-CoA + 3 malonyl-CoA + 3 H(+) = 2',4,4',6'-tetrahydroxychalcone + 3 CO2 + 4 CoA</text>
        <dbReference type="Rhea" id="RHEA:11128"/>
        <dbReference type="ChEBI" id="CHEBI:15378"/>
        <dbReference type="ChEBI" id="CHEBI:15413"/>
        <dbReference type="ChEBI" id="CHEBI:16526"/>
        <dbReference type="ChEBI" id="CHEBI:57287"/>
        <dbReference type="ChEBI" id="CHEBI:57384"/>
        <dbReference type="ChEBI" id="CHEBI:85008"/>
        <dbReference type="EC" id="2.3.1.74"/>
    </reaction>
</comment>
<comment type="pathway">
    <text>Secondary metabolite biosynthesis; flavonoid biosynthesis.</text>
</comment>
<comment type="similarity">
    <text evidence="2">Belongs to the thiolase-like superfamily. Chalcone/stilbene synthases family.</text>
</comment>
<name>CHSB_IPONI</name>
<reference key="1">
    <citation type="journal article" date="1995" name="Proc. Natl. Acad. Sci. U.S.A.">
        <title>Evolution of the chalcone synthase gene family in the genus Ipomoea.</title>
        <authorList>
            <person name="Durbin M.L."/>
            <person name="Learn G.H."/>
            <person name="Huttley G.A."/>
            <person name="Clegg M.T."/>
        </authorList>
    </citation>
    <scope>NUCLEOTIDE SEQUENCE [GENOMIC DNA]</scope>
</reference>
<proteinExistence type="inferred from homology"/>
<sequence>MSTILNVLTDTWSPRAKKLEGDAKIWAIGTATPANWVDQTTYPDFYFRITNSQHLLEHKEKFRRICNKSKIRKRHLVLTEELLKKNPNLCTYNETSLNTRQDILVAEVPKLGKEAAMKAIKEWGRPISEITHLVFCTTSGVDMPGADFQLTKLLGLNSSVKRLMMYQQGCNAGAAMLRLAKDLAESNKGGRVLVVCAEITINIFRGPSLEQDDNLLAQCLFGDGAAAMIVAADPRPGLETPLFELVSSAQTIVPNTDSHLKLHLREMGLTFHCSKAVPSVLAENVEDCLVKAFEPYGISDWNSIFWVFHPGGNAIVDRVEERLGLGPEKFRASRDVLSEYGNLTSACVLFTLDEMRKKSKKDE</sequence>
<protein>
    <recommendedName>
        <fullName>Chalcone synthase B</fullName>
        <ecNumber>2.3.1.74</ecNumber>
    </recommendedName>
    <alternativeName>
        <fullName>Naringenin-chalcone synthase B</fullName>
        <shortName>CHS-B</shortName>
    </alternativeName>
</protein>
<accession>P48396</accession>
<evidence type="ECO:0000255" key="1">
    <source>
        <dbReference type="PROSITE-ProRule" id="PRU10023"/>
    </source>
</evidence>
<evidence type="ECO:0000305" key="2"/>
<gene>
    <name type="primary">CHSB</name>
</gene>
<keyword id="KW-0012">Acyltransferase</keyword>
<keyword id="KW-0284">Flavonoid biosynthesis</keyword>
<keyword id="KW-0808">Transferase</keyword>